<keyword id="KW-0963">Cytoplasm</keyword>
<keyword id="KW-0489">Methyltransferase</keyword>
<keyword id="KW-0949">S-adenosyl-L-methionine</keyword>
<keyword id="KW-0808">Transferase</keyword>
<evidence type="ECO:0000255" key="1">
    <source>
        <dbReference type="HAMAP-Rule" id="MF_00090"/>
    </source>
</evidence>
<name>PIMT_METVS</name>
<comment type="function">
    <text evidence="1">Catalyzes the methyl esterification of L-isoaspartyl residues in peptides and proteins that result from spontaneous decomposition of normal L-aspartyl and L-asparaginyl residues. It plays a role in the repair and/or degradation of damaged proteins.</text>
</comment>
<comment type="catalytic activity">
    <reaction evidence="1">
        <text>[protein]-L-isoaspartate + S-adenosyl-L-methionine = [protein]-L-isoaspartate alpha-methyl ester + S-adenosyl-L-homocysteine</text>
        <dbReference type="Rhea" id="RHEA:12705"/>
        <dbReference type="Rhea" id="RHEA-COMP:12143"/>
        <dbReference type="Rhea" id="RHEA-COMP:12144"/>
        <dbReference type="ChEBI" id="CHEBI:57856"/>
        <dbReference type="ChEBI" id="CHEBI:59789"/>
        <dbReference type="ChEBI" id="CHEBI:90596"/>
        <dbReference type="ChEBI" id="CHEBI:90598"/>
        <dbReference type="EC" id="2.1.1.77"/>
    </reaction>
</comment>
<comment type="subcellular location">
    <subcellularLocation>
        <location evidence="1">Cytoplasm</location>
    </subcellularLocation>
</comment>
<comment type="similarity">
    <text evidence="1">Belongs to the methyltransferase superfamily. L-isoaspartyl/D-aspartyl protein methyltransferase family.</text>
</comment>
<proteinExistence type="inferred from homology"/>
<dbReference type="EC" id="2.1.1.77" evidence="1"/>
<dbReference type="EMBL" id="CP000742">
    <property type="protein sequence ID" value="ABR55012.1"/>
    <property type="molecule type" value="Genomic_DNA"/>
</dbReference>
<dbReference type="RefSeq" id="WP_012065927.1">
    <property type="nucleotide sequence ID" value="NC_009634.1"/>
</dbReference>
<dbReference type="SMR" id="A6UR90"/>
<dbReference type="STRING" id="406327.Mevan_1112"/>
<dbReference type="GeneID" id="5325070"/>
<dbReference type="KEGG" id="mvn:Mevan_1112"/>
<dbReference type="eggNOG" id="arCOG00976">
    <property type="taxonomic scope" value="Archaea"/>
</dbReference>
<dbReference type="HOGENOM" id="CLU_055432_2_0_2"/>
<dbReference type="OrthoDB" id="33618at2157"/>
<dbReference type="Proteomes" id="UP000001107">
    <property type="component" value="Chromosome"/>
</dbReference>
<dbReference type="GO" id="GO:0005737">
    <property type="term" value="C:cytoplasm"/>
    <property type="evidence" value="ECO:0007669"/>
    <property type="project" value="UniProtKB-SubCell"/>
</dbReference>
<dbReference type="GO" id="GO:0004719">
    <property type="term" value="F:protein-L-isoaspartate (D-aspartate) O-methyltransferase activity"/>
    <property type="evidence" value="ECO:0007669"/>
    <property type="project" value="UniProtKB-UniRule"/>
</dbReference>
<dbReference type="GO" id="GO:0032259">
    <property type="term" value="P:methylation"/>
    <property type="evidence" value="ECO:0007669"/>
    <property type="project" value="UniProtKB-KW"/>
</dbReference>
<dbReference type="GO" id="GO:0036211">
    <property type="term" value="P:protein modification process"/>
    <property type="evidence" value="ECO:0007669"/>
    <property type="project" value="UniProtKB-UniRule"/>
</dbReference>
<dbReference type="GO" id="GO:0030091">
    <property type="term" value="P:protein repair"/>
    <property type="evidence" value="ECO:0007669"/>
    <property type="project" value="UniProtKB-UniRule"/>
</dbReference>
<dbReference type="CDD" id="cd02440">
    <property type="entry name" value="AdoMet_MTases"/>
    <property type="match status" value="1"/>
</dbReference>
<dbReference type="FunFam" id="3.40.50.150:FF:000010">
    <property type="entry name" value="Protein-L-isoaspartate O-methyltransferase"/>
    <property type="match status" value="1"/>
</dbReference>
<dbReference type="Gene3D" id="3.40.50.150">
    <property type="entry name" value="Vaccinia Virus protein VP39"/>
    <property type="match status" value="1"/>
</dbReference>
<dbReference type="HAMAP" id="MF_00090">
    <property type="entry name" value="PIMT"/>
    <property type="match status" value="1"/>
</dbReference>
<dbReference type="InterPro" id="IPR000682">
    <property type="entry name" value="PCMT"/>
</dbReference>
<dbReference type="InterPro" id="IPR029063">
    <property type="entry name" value="SAM-dependent_MTases_sf"/>
</dbReference>
<dbReference type="NCBIfam" id="TIGR00080">
    <property type="entry name" value="pimt"/>
    <property type="match status" value="1"/>
</dbReference>
<dbReference type="NCBIfam" id="NF001453">
    <property type="entry name" value="PRK00312.1"/>
    <property type="match status" value="1"/>
</dbReference>
<dbReference type="NCBIfam" id="NF010549">
    <property type="entry name" value="PRK13942.1"/>
    <property type="match status" value="1"/>
</dbReference>
<dbReference type="PANTHER" id="PTHR11579">
    <property type="entry name" value="PROTEIN-L-ISOASPARTATE O-METHYLTRANSFERASE"/>
    <property type="match status" value="1"/>
</dbReference>
<dbReference type="PANTHER" id="PTHR11579:SF0">
    <property type="entry name" value="PROTEIN-L-ISOASPARTATE(D-ASPARTATE) O-METHYLTRANSFERASE"/>
    <property type="match status" value="1"/>
</dbReference>
<dbReference type="Pfam" id="PF01135">
    <property type="entry name" value="PCMT"/>
    <property type="match status" value="1"/>
</dbReference>
<dbReference type="SUPFAM" id="SSF53335">
    <property type="entry name" value="S-adenosyl-L-methionine-dependent methyltransferases"/>
    <property type="match status" value="1"/>
</dbReference>
<reference key="1">
    <citation type="submission" date="2007-06" db="EMBL/GenBank/DDBJ databases">
        <title>Complete sequence of Methanococcus vannielii SB.</title>
        <authorList>
            <consortium name="US DOE Joint Genome Institute"/>
            <person name="Copeland A."/>
            <person name="Lucas S."/>
            <person name="Lapidus A."/>
            <person name="Barry K."/>
            <person name="Glavina del Rio T."/>
            <person name="Dalin E."/>
            <person name="Tice H."/>
            <person name="Pitluck S."/>
            <person name="Chain P."/>
            <person name="Malfatti S."/>
            <person name="Shin M."/>
            <person name="Vergez L."/>
            <person name="Schmutz J."/>
            <person name="Larimer F."/>
            <person name="Land M."/>
            <person name="Hauser L."/>
            <person name="Kyrpides N."/>
            <person name="Anderson I."/>
            <person name="Sieprawska-Lupa M."/>
            <person name="Whitman W.B."/>
            <person name="Richardson P."/>
        </authorList>
    </citation>
    <scope>NUCLEOTIDE SEQUENCE [LARGE SCALE GENOMIC DNA]</scope>
    <source>
        <strain>ATCC 35089 / DSM 1224 / JCM 13029 / OCM 148 / SB</strain>
    </source>
</reference>
<feature type="chain" id="PRO_1000093261" description="Protein-L-isoaspartate O-methyltransferase">
    <location>
        <begin position="1"/>
        <end position="209"/>
    </location>
</feature>
<feature type="active site" evidence="1">
    <location>
        <position position="60"/>
    </location>
</feature>
<gene>
    <name evidence="1" type="primary">pcm</name>
    <name type="ordered locus">Mevan_1112</name>
</gene>
<sequence length="209" mass="23305">MPLNEMVSVVTNLVERGYIRKKSVVSALLSVPRHKFVPKYLESSAYQDNPLEIGYGQTISAIHMVGIMCEELDLDKGQNVLEIGTGSGYHAAVVLEIIGKSGKLTTIERVFELFNSAKENLLKFGYNNIEVIYGDGTKGHIENAPYDRIYLTAAGKKVPEILFEQLNDGGILLAPVGTYNQYLIKYMKINGQIYEEILLEVSFVPLIEE</sequence>
<protein>
    <recommendedName>
        <fullName evidence="1">Protein-L-isoaspartate O-methyltransferase</fullName>
        <ecNumber evidence="1">2.1.1.77</ecNumber>
    </recommendedName>
    <alternativeName>
        <fullName evidence="1">L-isoaspartyl protein carboxyl methyltransferase</fullName>
    </alternativeName>
    <alternativeName>
        <fullName evidence="1">Protein L-isoaspartyl methyltransferase</fullName>
    </alternativeName>
    <alternativeName>
        <fullName evidence="1">Protein-beta-aspartate methyltransferase</fullName>
        <shortName evidence="1">PIMT</shortName>
    </alternativeName>
</protein>
<organism>
    <name type="scientific">Methanococcus vannielii (strain ATCC 35089 / DSM 1224 / JCM 13029 / OCM 148 / SB)</name>
    <dbReference type="NCBI Taxonomy" id="406327"/>
    <lineage>
        <taxon>Archaea</taxon>
        <taxon>Methanobacteriati</taxon>
        <taxon>Methanobacteriota</taxon>
        <taxon>Methanomada group</taxon>
        <taxon>Methanococci</taxon>
        <taxon>Methanococcales</taxon>
        <taxon>Methanococcaceae</taxon>
        <taxon>Methanococcus</taxon>
    </lineage>
</organism>
<accession>A6UR90</accession>